<comment type="function">
    <text evidence="1">Mediates the nuclear export of encapsidated genomic RNAs (ribonucleoproteins, RNPs). Acts as an adapter between viral RNPs complexes and the nuclear export machinery of the cell. Possesses no intrinsic RNA-binding activity, but includes a C-terminal M1-binding domain. This domain is believed to allow recognition of RNPs bound to the protein M1. Since protein M1 is not available in large quantities before late stages of infection, such an indirect recognition mechanism probably ensures that genomic RNPs are not exported from the host nucleus until sufficient quantities of viral mRNA and progeny genomic RNA have been synthesized. Furthermore, the RNPs enter the host cytoplasm only when associated with the M1 protein that is necessary to guide them to the plasma membrane. May down-regulate viral RNA synthesis when overproduced.</text>
</comment>
<comment type="subunit">
    <text evidence="1">Interacts with protein M1. May interact with host nucleoporin RAB/HRB and exportin XPO1/CRM1.</text>
</comment>
<comment type="subcellular location">
    <subcellularLocation>
        <location evidence="1">Virion</location>
    </subcellularLocation>
    <subcellularLocation>
        <location evidence="1">Host nucleus</location>
    </subcellularLocation>
</comment>
<comment type="alternative products">
    <event type="alternative splicing"/>
    <isoform>
        <id>A4GCJ1-1</id>
        <name>NEP</name>
        <name>NS2</name>
        <sequence type="displayed"/>
    </isoform>
    <isoform>
        <id>A4GCJ2-1</id>
        <name>NS1</name>
        <sequence type="external"/>
    </isoform>
</comment>
<comment type="miscellaneous">
    <text>Average number present in a viral particle is estimated to be 130-200 molecules.</text>
</comment>
<comment type="similarity">
    <text evidence="1">Belongs to the influenza viruses NEP family.</text>
</comment>
<gene>
    <name evidence="1" type="primary">NS</name>
</gene>
<keyword id="KW-0025">Alternative splicing</keyword>
<keyword id="KW-1048">Host nucleus</keyword>
<keyword id="KW-0945">Host-virus interaction</keyword>
<keyword id="KW-0813">Transport</keyword>
<keyword id="KW-0946">Virion</keyword>
<sequence>MDPNTVSSFQDILMRMSKMQLGSSSEDLNGMITQFESLKLYRDSLGEAVMRMGDLHSLQNRNGKWREQLGQKFEEIRWLIEEVRHKLKVTENSFEQITFMQALHLLLEVEQEIRTFSFQLI</sequence>
<evidence type="ECO:0000255" key="1">
    <source>
        <dbReference type="HAMAP-Rule" id="MF_04067"/>
    </source>
</evidence>
<organismHost>
    <name type="scientific">Aves</name>
    <dbReference type="NCBI Taxonomy" id="8782"/>
</organismHost>
<organismHost>
    <name type="scientific">Homo sapiens</name>
    <name type="common">Human</name>
    <dbReference type="NCBI Taxonomy" id="9606"/>
</organismHost>
<organismHost>
    <name type="scientific">Sus scrofa</name>
    <name type="common">Pig</name>
    <dbReference type="NCBI Taxonomy" id="9823"/>
</organismHost>
<proteinExistence type="inferred from homology"/>
<reference key="1">
    <citation type="submission" date="2007-03" db="EMBL/GenBank/DDBJ databases">
        <title>The NIAID influenza genome sequencing project.</title>
        <authorList>
            <person name="Ghedin E."/>
            <person name="Spiro D."/>
            <person name="Miller N."/>
            <person name="Zaborsky J."/>
            <person name="Feldblyum T."/>
            <person name="Subbu V."/>
            <person name="Shumway M."/>
            <person name="Sparenborg J."/>
            <person name="Groveman L."/>
            <person name="Halpin R."/>
            <person name="Sitz J."/>
            <person name="Koo H."/>
            <person name="Salzberg S.L."/>
            <person name="Webster R.G."/>
            <person name="Hoffmann E."/>
            <person name="Krauss S."/>
            <person name="Naeve C."/>
            <person name="Bao Y."/>
            <person name="Bolotov P."/>
            <person name="Dernovoy D."/>
            <person name="Kiryutin B."/>
            <person name="Lipman D.J."/>
            <person name="Tatusova T."/>
        </authorList>
    </citation>
    <scope>NUCLEOTIDE SEQUENCE [GENOMIC RNA]</scope>
</reference>
<reference key="2">
    <citation type="submission" date="2007-03" db="EMBL/GenBank/DDBJ databases">
        <authorList>
            <consortium name="The NIAID Influenza Genome Sequencing Consortium"/>
        </authorList>
    </citation>
    <scope>NUCLEOTIDE SEQUENCE [GENOMIC RNA]</scope>
</reference>
<accession>A4GCJ1</accession>
<protein>
    <recommendedName>
        <fullName evidence="1">Nuclear export protein</fullName>
        <shortName evidence="1">NEP</shortName>
    </recommendedName>
    <alternativeName>
        <fullName evidence="1">Non-structural protein 2</fullName>
        <shortName evidence="1">NS2</shortName>
    </alternativeName>
</protein>
<organism>
    <name type="scientific">Influenza A virus (strain A/Henry/1936 H1N1)</name>
    <dbReference type="NCBI Taxonomy" id="425562"/>
    <lineage>
        <taxon>Viruses</taxon>
        <taxon>Riboviria</taxon>
        <taxon>Orthornavirae</taxon>
        <taxon>Negarnaviricota</taxon>
        <taxon>Polyploviricotina</taxon>
        <taxon>Insthoviricetes</taxon>
        <taxon>Articulavirales</taxon>
        <taxon>Orthomyxoviridae</taxon>
        <taxon>Alphainfluenzavirus</taxon>
        <taxon>Alphainfluenzavirus influenzae</taxon>
        <taxon>Influenza A virus</taxon>
    </lineage>
</organism>
<feature type="chain" id="PRO_0000372949" description="Nuclear export protein">
    <location>
        <begin position="1"/>
        <end position="121"/>
    </location>
</feature>
<feature type="short sequence motif" description="Nuclear export signal" evidence="1">
    <location>
        <begin position="12"/>
        <end position="21"/>
    </location>
</feature>
<feature type="short sequence motif" description="Nuclear export signal" evidence="1">
    <location>
        <begin position="85"/>
        <end position="94"/>
    </location>
</feature>
<name>NEP_I36A0</name>
<dbReference type="EMBL" id="CY020449">
    <property type="protein sequence ID" value="ABO38357.1"/>
    <property type="molecule type" value="Viral_cRNA"/>
</dbReference>
<dbReference type="SMR" id="A4GCJ1"/>
<dbReference type="Proteomes" id="UP000008213">
    <property type="component" value="Genome"/>
</dbReference>
<dbReference type="GO" id="GO:0042025">
    <property type="term" value="C:host cell nucleus"/>
    <property type="evidence" value="ECO:0007669"/>
    <property type="project" value="UniProtKB-SubCell"/>
</dbReference>
<dbReference type="GO" id="GO:0044423">
    <property type="term" value="C:virion component"/>
    <property type="evidence" value="ECO:0007669"/>
    <property type="project" value="UniProtKB-UniRule"/>
</dbReference>
<dbReference type="GO" id="GO:0039675">
    <property type="term" value="P:exit of virus from host cell nucleus through nuclear pore"/>
    <property type="evidence" value="ECO:0007669"/>
    <property type="project" value="UniProtKB-UniRule"/>
</dbReference>
<dbReference type="FunFam" id="1.10.287.230:FF:000001">
    <property type="entry name" value="Nuclear export protein"/>
    <property type="match status" value="1"/>
</dbReference>
<dbReference type="Gene3D" id="1.10.287.230">
    <property type="match status" value="1"/>
</dbReference>
<dbReference type="Gene3D" id="1.10.287.10">
    <property type="entry name" value="S15/NS1, RNA-binding"/>
    <property type="match status" value="1"/>
</dbReference>
<dbReference type="HAMAP" id="MF_04067">
    <property type="entry name" value="INFV_NEP"/>
    <property type="match status" value="1"/>
</dbReference>
<dbReference type="InterPro" id="IPR000968">
    <property type="entry name" value="Flu_NS2"/>
</dbReference>
<dbReference type="Pfam" id="PF00601">
    <property type="entry name" value="Flu_NS2"/>
    <property type="match status" value="1"/>
</dbReference>
<dbReference type="SUPFAM" id="SSF101156">
    <property type="entry name" value="Nonstructural protein ns2, Nep, M1-binding domain"/>
    <property type="match status" value="1"/>
</dbReference>